<reference key="1">
    <citation type="journal article" date="2002" name="Nucleic Acids Res.">
        <title>The complete genomic sequence of Mycoplasma penetrans, an intracellular bacterial pathogen in humans.</title>
        <authorList>
            <person name="Sasaki Y."/>
            <person name="Ishikawa J."/>
            <person name="Yamashita A."/>
            <person name="Oshima K."/>
            <person name="Kenri T."/>
            <person name="Furuya K."/>
            <person name="Yoshino C."/>
            <person name="Horino A."/>
            <person name="Shiba T."/>
            <person name="Sasaki T."/>
            <person name="Hattori M."/>
        </authorList>
    </citation>
    <scope>NUCLEOTIDE SEQUENCE [LARGE SCALE GENOMIC DNA]</scope>
    <source>
        <strain>HF-2</strain>
    </source>
</reference>
<keyword id="KW-0963">Cytoplasm</keyword>
<keyword id="KW-0489">Methyltransferase</keyword>
<keyword id="KW-1185">Reference proteome</keyword>
<keyword id="KW-0698">rRNA processing</keyword>
<keyword id="KW-0949">S-adenosyl-L-methionine</keyword>
<keyword id="KW-0808">Transferase</keyword>
<evidence type="ECO:0000255" key="1">
    <source>
        <dbReference type="HAMAP-Rule" id="MF_01007"/>
    </source>
</evidence>
<accession>Q8EW81</accession>
<comment type="function">
    <text evidence="1">Specifically methylates the N4 position of cytidine in position 1402 (C1402) of 16S rRNA.</text>
</comment>
<comment type="catalytic activity">
    <reaction evidence="1">
        <text>cytidine(1402) in 16S rRNA + S-adenosyl-L-methionine = N(4)-methylcytidine(1402) in 16S rRNA + S-adenosyl-L-homocysteine + H(+)</text>
        <dbReference type="Rhea" id="RHEA:42928"/>
        <dbReference type="Rhea" id="RHEA-COMP:10286"/>
        <dbReference type="Rhea" id="RHEA-COMP:10287"/>
        <dbReference type="ChEBI" id="CHEBI:15378"/>
        <dbReference type="ChEBI" id="CHEBI:57856"/>
        <dbReference type="ChEBI" id="CHEBI:59789"/>
        <dbReference type="ChEBI" id="CHEBI:74506"/>
        <dbReference type="ChEBI" id="CHEBI:82748"/>
        <dbReference type="EC" id="2.1.1.199"/>
    </reaction>
</comment>
<comment type="subcellular location">
    <subcellularLocation>
        <location evidence="1">Cytoplasm</location>
    </subcellularLocation>
</comment>
<comment type="similarity">
    <text evidence="1">Belongs to the methyltransferase superfamily. RsmH family.</text>
</comment>
<organism>
    <name type="scientific">Malacoplasma penetrans (strain HF-2)</name>
    <name type="common">Mycoplasma penetrans</name>
    <dbReference type="NCBI Taxonomy" id="272633"/>
    <lineage>
        <taxon>Bacteria</taxon>
        <taxon>Bacillati</taxon>
        <taxon>Mycoplasmatota</taxon>
        <taxon>Mycoplasmoidales</taxon>
        <taxon>Mycoplasmoidaceae</taxon>
        <taxon>Malacoplasma</taxon>
    </lineage>
</organism>
<dbReference type="EC" id="2.1.1.199" evidence="1"/>
<dbReference type="EMBL" id="BA000026">
    <property type="protein sequence ID" value="BAC44115.1"/>
    <property type="molecule type" value="Genomic_DNA"/>
</dbReference>
<dbReference type="RefSeq" id="WP_011077151.1">
    <property type="nucleotide sequence ID" value="NC_004432.1"/>
</dbReference>
<dbReference type="SMR" id="Q8EW81"/>
<dbReference type="FunCoup" id="Q8EW81">
    <property type="interactions" value="229"/>
</dbReference>
<dbReference type="STRING" id="272633.gene:10731427"/>
<dbReference type="KEGG" id="mpe:MYPE3220"/>
<dbReference type="eggNOG" id="COG0275">
    <property type="taxonomic scope" value="Bacteria"/>
</dbReference>
<dbReference type="HOGENOM" id="CLU_038422_2_0_14"/>
<dbReference type="InParanoid" id="Q8EW81"/>
<dbReference type="Proteomes" id="UP000002522">
    <property type="component" value="Chromosome"/>
</dbReference>
<dbReference type="GO" id="GO:0005737">
    <property type="term" value="C:cytoplasm"/>
    <property type="evidence" value="ECO:0007669"/>
    <property type="project" value="UniProtKB-SubCell"/>
</dbReference>
<dbReference type="GO" id="GO:0071424">
    <property type="term" value="F:rRNA (cytosine-N4-)-methyltransferase activity"/>
    <property type="evidence" value="ECO:0007669"/>
    <property type="project" value="UniProtKB-UniRule"/>
</dbReference>
<dbReference type="GO" id="GO:0070475">
    <property type="term" value="P:rRNA base methylation"/>
    <property type="evidence" value="ECO:0007669"/>
    <property type="project" value="UniProtKB-UniRule"/>
</dbReference>
<dbReference type="Gene3D" id="1.10.150.170">
    <property type="entry name" value="Putative methyltransferase TM0872, insert domain"/>
    <property type="match status" value="1"/>
</dbReference>
<dbReference type="Gene3D" id="3.40.50.150">
    <property type="entry name" value="Vaccinia Virus protein VP39"/>
    <property type="match status" value="1"/>
</dbReference>
<dbReference type="HAMAP" id="MF_01007">
    <property type="entry name" value="16SrRNA_methyltr_H"/>
    <property type="match status" value="1"/>
</dbReference>
<dbReference type="InterPro" id="IPR002903">
    <property type="entry name" value="RsmH"/>
</dbReference>
<dbReference type="InterPro" id="IPR023397">
    <property type="entry name" value="SAM-dep_MeTrfase_MraW_recog"/>
</dbReference>
<dbReference type="InterPro" id="IPR029063">
    <property type="entry name" value="SAM-dependent_MTases_sf"/>
</dbReference>
<dbReference type="NCBIfam" id="TIGR00006">
    <property type="entry name" value="16S rRNA (cytosine(1402)-N(4))-methyltransferase RsmH"/>
    <property type="match status" value="1"/>
</dbReference>
<dbReference type="PANTHER" id="PTHR11265:SF0">
    <property type="entry name" value="12S RRNA N4-METHYLCYTIDINE METHYLTRANSFERASE"/>
    <property type="match status" value="1"/>
</dbReference>
<dbReference type="PANTHER" id="PTHR11265">
    <property type="entry name" value="S-ADENOSYL-METHYLTRANSFERASE MRAW"/>
    <property type="match status" value="1"/>
</dbReference>
<dbReference type="Pfam" id="PF01795">
    <property type="entry name" value="Methyltransf_5"/>
    <property type="match status" value="1"/>
</dbReference>
<dbReference type="PIRSF" id="PIRSF004486">
    <property type="entry name" value="MraW"/>
    <property type="match status" value="1"/>
</dbReference>
<dbReference type="SUPFAM" id="SSF81799">
    <property type="entry name" value="Putative methyltransferase TM0872, insert domain"/>
    <property type="match status" value="1"/>
</dbReference>
<dbReference type="SUPFAM" id="SSF53335">
    <property type="entry name" value="S-adenosyl-L-methionine-dependent methyltransferases"/>
    <property type="match status" value="1"/>
</dbReference>
<gene>
    <name evidence="1" type="primary">rsmH</name>
    <name type="synonym">mraW</name>
    <name type="ordered locus">MYPE3220</name>
</gene>
<sequence>MNNINSNKHISVRLEDAVDSLNIQKDKIYVDCTFGRGGHSFEILKRLSSKGKLFVFDLDLDAKKYFDNNFSKFKNCFFIQDNFKNLKENLAKFDISKVDGFLFDFGVSSPMLDNANRGFSFKLDARLDMRMNQNQELSAYEVINNYSKEKLIQIFWKYGEIRNPVPVVDEIIKYRSNKPIETTLELVDIIRKRTPIKIQREKKHFARTYFQAIRIEVNDELNSIRKALSDALNMLSKNGRIVTISFHSLEEKEIKNTYKDVLESKIPKEVPINNSFDFKIIKIKPKRASSSELEENNRTRSSFLKVIERVNE</sequence>
<protein>
    <recommendedName>
        <fullName evidence="1">Ribosomal RNA small subunit methyltransferase H</fullName>
        <ecNumber evidence="1">2.1.1.199</ecNumber>
    </recommendedName>
    <alternativeName>
        <fullName evidence="1">16S rRNA m(4)C1402 methyltransferase</fullName>
    </alternativeName>
    <alternativeName>
        <fullName evidence="1">rRNA (cytosine-N(4)-)-methyltransferase RsmH</fullName>
    </alternativeName>
</protein>
<proteinExistence type="inferred from homology"/>
<feature type="chain" id="PRO_0000108664" description="Ribosomal RNA small subunit methyltransferase H">
    <location>
        <begin position="1"/>
        <end position="312"/>
    </location>
</feature>
<feature type="binding site" evidence="1">
    <location>
        <begin position="37"/>
        <end position="39"/>
    </location>
    <ligand>
        <name>S-adenosyl-L-methionine</name>
        <dbReference type="ChEBI" id="CHEBI:59789"/>
    </ligand>
</feature>
<feature type="binding site" evidence="1">
    <location>
        <position position="57"/>
    </location>
    <ligand>
        <name>S-adenosyl-L-methionine</name>
        <dbReference type="ChEBI" id="CHEBI:59789"/>
    </ligand>
</feature>
<feature type="binding site" evidence="1">
    <location>
        <position position="83"/>
    </location>
    <ligand>
        <name>S-adenosyl-L-methionine</name>
        <dbReference type="ChEBI" id="CHEBI:59789"/>
    </ligand>
</feature>
<feature type="binding site" evidence="1">
    <location>
        <position position="104"/>
    </location>
    <ligand>
        <name>S-adenosyl-L-methionine</name>
        <dbReference type="ChEBI" id="CHEBI:59789"/>
    </ligand>
</feature>
<name>RSMH_MALP2</name>